<protein>
    <recommendedName>
        <fullName evidence="1">6,7-dimethyl-8-ribityllumazine synthase</fullName>
        <shortName evidence="1">DMRL synthase</shortName>
        <shortName evidence="1">LS</shortName>
        <shortName evidence="1">Lumazine synthase</shortName>
        <ecNumber evidence="1">2.5.1.78</ecNumber>
    </recommendedName>
</protein>
<dbReference type="EC" id="2.5.1.78" evidence="1"/>
<dbReference type="EMBL" id="CP001078">
    <property type="protein sequence ID" value="ACD52594.1"/>
    <property type="molecule type" value="Genomic_DNA"/>
</dbReference>
<dbReference type="SMR" id="B2V4J4"/>
<dbReference type="KEGG" id="cbt:CLH_1249"/>
<dbReference type="HOGENOM" id="CLU_089358_1_1_9"/>
<dbReference type="UniPathway" id="UPA00275">
    <property type="reaction ID" value="UER00404"/>
</dbReference>
<dbReference type="GO" id="GO:0005829">
    <property type="term" value="C:cytosol"/>
    <property type="evidence" value="ECO:0007669"/>
    <property type="project" value="TreeGrafter"/>
</dbReference>
<dbReference type="GO" id="GO:0009349">
    <property type="term" value="C:riboflavin synthase complex"/>
    <property type="evidence" value="ECO:0007669"/>
    <property type="project" value="InterPro"/>
</dbReference>
<dbReference type="GO" id="GO:0000906">
    <property type="term" value="F:6,7-dimethyl-8-ribityllumazine synthase activity"/>
    <property type="evidence" value="ECO:0007669"/>
    <property type="project" value="UniProtKB-UniRule"/>
</dbReference>
<dbReference type="GO" id="GO:0009231">
    <property type="term" value="P:riboflavin biosynthetic process"/>
    <property type="evidence" value="ECO:0007669"/>
    <property type="project" value="UniProtKB-UniRule"/>
</dbReference>
<dbReference type="CDD" id="cd09209">
    <property type="entry name" value="Lumazine_synthase-I"/>
    <property type="match status" value="1"/>
</dbReference>
<dbReference type="FunFam" id="3.40.50.960:FF:000001">
    <property type="entry name" value="6,7-dimethyl-8-ribityllumazine synthase"/>
    <property type="match status" value="1"/>
</dbReference>
<dbReference type="Gene3D" id="3.40.50.960">
    <property type="entry name" value="Lumazine/riboflavin synthase"/>
    <property type="match status" value="1"/>
</dbReference>
<dbReference type="HAMAP" id="MF_00178">
    <property type="entry name" value="Lumazine_synth"/>
    <property type="match status" value="1"/>
</dbReference>
<dbReference type="InterPro" id="IPR034964">
    <property type="entry name" value="LS"/>
</dbReference>
<dbReference type="InterPro" id="IPR002180">
    <property type="entry name" value="LS/RS"/>
</dbReference>
<dbReference type="InterPro" id="IPR036467">
    <property type="entry name" value="LS/RS_sf"/>
</dbReference>
<dbReference type="NCBIfam" id="TIGR00114">
    <property type="entry name" value="lumazine-synth"/>
    <property type="match status" value="1"/>
</dbReference>
<dbReference type="NCBIfam" id="NF000812">
    <property type="entry name" value="PRK00061.1-4"/>
    <property type="match status" value="1"/>
</dbReference>
<dbReference type="PANTHER" id="PTHR21058:SF0">
    <property type="entry name" value="6,7-DIMETHYL-8-RIBITYLLUMAZINE SYNTHASE"/>
    <property type="match status" value="1"/>
</dbReference>
<dbReference type="PANTHER" id="PTHR21058">
    <property type="entry name" value="6,7-DIMETHYL-8-RIBITYLLUMAZINE SYNTHASE DMRL SYNTHASE LUMAZINE SYNTHASE"/>
    <property type="match status" value="1"/>
</dbReference>
<dbReference type="Pfam" id="PF00885">
    <property type="entry name" value="DMRL_synthase"/>
    <property type="match status" value="1"/>
</dbReference>
<dbReference type="SUPFAM" id="SSF52121">
    <property type="entry name" value="Lumazine synthase"/>
    <property type="match status" value="1"/>
</dbReference>
<gene>
    <name evidence="1" type="primary">ribH</name>
    <name type="ordered locus">CLH_1249</name>
</gene>
<comment type="function">
    <text evidence="1">Catalyzes the formation of 6,7-dimethyl-8-ribityllumazine by condensation of 5-amino-6-(D-ribitylamino)uracil with 3,4-dihydroxy-2-butanone 4-phosphate. This is the penultimate step in the biosynthesis of riboflavin.</text>
</comment>
<comment type="catalytic activity">
    <reaction evidence="1">
        <text>(2S)-2-hydroxy-3-oxobutyl phosphate + 5-amino-6-(D-ribitylamino)uracil = 6,7-dimethyl-8-(1-D-ribityl)lumazine + phosphate + 2 H2O + H(+)</text>
        <dbReference type="Rhea" id="RHEA:26152"/>
        <dbReference type="ChEBI" id="CHEBI:15377"/>
        <dbReference type="ChEBI" id="CHEBI:15378"/>
        <dbReference type="ChEBI" id="CHEBI:15934"/>
        <dbReference type="ChEBI" id="CHEBI:43474"/>
        <dbReference type="ChEBI" id="CHEBI:58201"/>
        <dbReference type="ChEBI" id="CHEBI:58830"/>
        <dbReference type="EC" id="2.5.1.78"/>
    </reaction>
</comment>
<comment type="pathway">
    <text evidence="1">Cofactor biosynthesis; riboflavin biosynthesis; riboflavin from 2-hydroxy-3-oxobutyl phosphate and 5-amino-6-(D-ribitylamino)uracil: step 1/2.</text>
</comment>
<comment type="similarity">
    <text evidence="1">Belongs to the DMRL synthase family.</text>
</comment>
<feature type="chain" id="PRO_1000098176" description="6,7-dimethyl-8-ribityllumazine synthase">
    <location>
        <begin position="1"/>
        <end position="153"/>
    </location>
</feature>
<feature type="active site" description="Proton donor" evidence="1">
    <location>
        <position position="88"/>
    </location>
</feature>
<feature type="binding site" evidence="1">
    <location>
        <position position="22"/>
    </location>
    <ligand>
        <name>5-amino-6-(D-ribitylamino)uracil</name>
        <dbReference type="ChEBI" id="CHEBI:15934"/>
    </ligand>
</feature>
<feature type="binding site" evidence="1">
    <location>
        <begin position="56"/>
        <end position="58"/>
    </location>
    <ligand>
        <name>5-amino-6-(D-ribitylamino)uracil</name>
        <dbReference type="ChEBI" id="CHEBI:15934"/>
    </ligand>
</feature>
<feature type="binding site" evidence="1">
    <location>
        <begin position="80"/>
        <end position="82"/>
    </location>
    <ligand>
        <name>5-amino-6-(D-ribitylamino)uracil</name>
        <dbReference type="ChEBI" id="CHEBI:15934"/>
    </ligand>
</feature>
<feature type="binding site" evidence="1">
    <location>
        <begin position="85"/>
        <end position="86"/>
    </location>
    <ligand>
        <name>(2S)-2-hydroxy-3-oxobutyl phosphate</name>
        <dbReference type="ChEBI" id="CHEBI:58830"/>
    </ligand>
</feature>
<feature type="binding site" evidence="1">
    <location>
        <position position="113"/>
    </location>
    <ligand>
        <name>5-amino-6-(D-ribitylamino)uracil</name>
        <dbReference type="ChEBI" id="CHEBI:15934"/>
    </ligand>
</feature>
<feature type="binding site" evidence="1">
    <location>
        <position position="127"/>
    </location>
    <ligand>
        <name>(2S)-2-hydroxy-3-oxobutyl phosphate</name>
        <dbReference type="ChEBI" id="CHEBI:58830"/>
    </ligand>
</feature>
<sequence length="153" mass="16317">MNIFEGKLIAEGLKVGIIVGRFNEFIGSKLLDGALDGLKRHGVNLEDIDVAWVPGAFEMPLIAKKMAKSPKYDAVICLGAVIKGSTSHYDYVCSEVSKGIANVSLETGKPVMFGVLTTNNIEQAIERAGTKAGNKGYECAVGAIEMANLIKEL</sequence>
<reference key="1">
    <citation type="submission" date="2008-05" db="EMBL/GenBank/DDBJ databases">
        <title>Complete genome sequence of Clostridium botulinum E3 str. Alaska E43.</title>
        <authorList>
            <person name="Brinkac L.M."/>
            <person name="Brown J.L."/>
            <person name="Bruce D."/>
            <person name="Detter C."/>
            <person name="Munk C."/>
            <person name="Smith L.A."/>
            <person name="Smith T.J."/>
            <person name="Sutton G."/>
            <person name="Brettin T.S."/>
        </authorList>
    </citation>
    <scope>NUCLEOTIDE SEQUENCE [LARGE SCALE GENOMIC DNA]</scope>
    <source>
        <strain>Alaska E43 / Type E3</strain>
    </source>
</reference>
<name>RISB_CLOBA</name>
<accession>B2V4J4</accession>
<organism>
    <name type="scientific">Clostridium botulinum (strain Alaska E43 / Type E3)</name>
    <dbReference type="NCBI Taxonomy" id="508767"/>
    <lineage>
        <taxon>Bacteria</taxon>
        <taxon>Bacillati</taxon>
        <taxon>Bacillota</taxon>
        <taxon>Clostridia</taxon>
        <taxon>Eubacteriales</taxon>
        <taxon>Clostridiaceae</taxon>
        <taxon>Clostridium</taxon>
    </lineage>
</organism>
<proteinExistence type="inferred from homology"/>
<keyword id="KW-0686">Riboflavin biosynthesis</keyword>
<keyword id="KW-0808">Transferase</keyword>
<evidence type="ECO:0000255" key="1">
    <source>
        <dbReference type="HAMAP-Rule" id="MF_00178"/>
    </source>
</evidence>